<keyword id="KW-0032">Aminotransferase</keyword>
<keyword id="KW-0576">Peroxisome</keyword>
<keyword id="KW-0663">Pyridoxal phosphate</keyword>
<keyword id="KW-0670">Pyruvate</keyword>
<keyword id="KW-1185">Reference proteome</keyword>
<keyword id="KW-0808">Transferase</keyword>
<reference evidence="15" key="1">
    <citation type="journal article" date="2000" name="Science">
        <title>The genome sequence of Drosophila melanogaster.</title>
        <authorList>
            <person name="Adams M.D."/>
            <person name="Celniker S.E."/>
            <person name="Holt R.A."/>
            <person name="Evans C.A."/>
            <person name="Gocayne J.D."/>
            <person name="Amanatides P.G."/>
            <person name="Scherer S.E."/>
            <person name="Li P.W."/>
            <person name="Hoskins R.A."/>
            <person name="Galle R.F."/>
            <person name="George R.A."/>
            <person name="Lewis S.E."/>
            <person name="Richards S."/>
            <person name="Ashburner M."/>
            <person name="Henderson S.N."/>
            <person name="Sutton G.G."/>
            <person name="Wortman J.R."/>
            <person name="Yandell M.D."/>
            <person name="Zhang Q."/>
            <person name="Chen L.X."/>
            <person name="Brandon R.C."/>
            <person name="Rogers Y.-H.C."/>
            <person name="Blazej R.G."/>
            <person name="Champe M."/>
            <person name="Pfeiffer B.D."/>
            <person name="Wan K.H."/>
            <person name="Doyle C."/>
            <person name="Baxter E.G."/>
            <person name="Helt G."/>
            <person name="Nelson C.R."/>
            <person name="Miklos G.L.G."/>
            <person name="Abril J.F."/>
            <person name="Agbayani A."/>
            <person name="An H.-J."/>
            <person name="Andrews-Pfannkoch C."/>
            <person name="Baldwin D."/>
            <person name="Ballew R.M."/>
            <person name="Basu A."/>
            <person name="Baxendale J."/>
            <person name="Bayraktaroglu L."/>
            <person name="Beasley E.M."/>
            <person name="Beeson K.Y."/>
            <person name="Benos P.V."/>
            <person name="Berman B.P."/>
            <person name="Bhandari D."/>
            <person name="Bolshakov S."/>
            <person name="Borkova D."/>
            <person name="Botchan M.R."/>
            <person name="Bouck J."/>
            <person name="Brokstein P."/>
            <person name="Brottier P."/>
            <person name="Burtis K.C."/>
            <person name="Busam D.A."/>
            <person name="Butler H."/>
            <person name="Cadieu E."/>
            <person name="Center A."/>
            <person name="Chandra I."/>
            <person name="Cherry J.M."/>
            <person name="Cawley S."/>
            <person name="Dahlke C."/>
            <person name="Davenport L.B."/>
            <person name="Davies P."/>
            <person name="de Pablos B."/>
            <person name="Delcher A."/>
            <person name="Deng Z."/>
            <person name="Mays A.D."/>
            <person name="Dew I."/>
            <person name="Dietz S.M."/>
            <person name="Dodson K."/>
            <person name="Doup L.E."/>
            <person name="Downes M."/>
            <person name="Dugan-Rocha S."/>
            <person name="Dunkov B.C."/>
            <person name="Dunn P."/>
            <person name="Durbin K.J."/>
            <person name="Evangelista C.C."/>
            <person name="Ferraz C."/>
            <person name="Ferriera S."/>
            <person name="Fleischmann W."/>
            <person name="Fosler C."/>
            <person name="Gabrielian A.E."/>
            <person name="Garg N.S."/>
            <person name="Gelbart W.M."/>
            <person name="Glasser K."/>
            <person name="Glodek A."/>
            <person name="Gong F."/>
            <person name="Gorrell J.H."/>
            <person name="Gu Z."/>
            <person name="Guan P."/>
            <person name="Harris M."/>
            <person name="Harris N.L."/>
            <person name="Harvey D.A."/>
            <person name="Heiman T.J."/>
            <person name="Hernandez J.R."/>
            <person name="Houck J."/>
            <person name="Hostin D."/>
            <person name="Houston K.A."/>
            <person name="Howland T.J."/>
            <person name="Wei M.-H."/>
            <person name="Ibegwam C."/>
            <person name="Jalali M."/>
            <person name="Kalush F."/>
            <person name="Karpen G.H."/>
            <person name="Ke Z."/>
            <person name="Kennison J.A."/>
            <person name="Ketchum K.A."/>
            <person name="Kimmel B.E."/>
            <person name="Kodira C.D."/>
            <person name="Kraft C.L."/>
            <person name="Kravitz S."/>
            <person name="Kulp D."/>
            <person name="Lai Z."/>
            <person name="Lasko P."/>
            <person name="Lei Y."/>
            <person name="Levitsky A.A."/>
            <person name="Li J.H."/>
            <person name="Li Z."/>
            <person name="Liang Y."/>
            <person name="Lin X."/>
            <person name="Liu X."/>
            <person name="Mattei B."/>
            <person name="McIntosh T.C."/>
            <person name="McLeod M.P."/>
            <person name="McPherson D."/>
            <person name="Merkulov G."/>
            <person name="Milshina N.V."/>
            <person name="Mobarry C."/>
            <person name="Morris J."/>
            <person name="Moshrefi A."/>
            <person name="Mount S.M."/>
            <person name="Moy M."/>
            <person name="Murphy B."/>
            <person name="Murphy L."/>
            <person name="Muzny D.M."/>
            <person name="Nelson D.L."/>
            <person name="Nelson D.R."/>
            <person name="Nelson K.A."/>
            <person name="Nixon K."/>
            <person name="Nusskern D.R."/>
            <person name="Pacleb J.M."/>
            <person name="Palazzolo M."/>
            <person name="Pittman G.S."/>
            <person name="Pan S."/>
            <person name="Pollard J."/>
            <person name="Puri V."/>
            <person name="Reese M.G."/>
            <person name="Reinert K."/>
            <person name="Remington K."/>
            <person name="Saunders R.D.C."/>
            <person name="Scheeler F."/>
            <person name="Shen H."/>
            <person name="Shue B.C."/>
            <person name="Siden-Kiamos I."/>
            <person name="Simpson M."/>
            <person name="Skupski M.P."/>
            <person name="Smith T.J."/>
            <person name="Spier E."/>
            <person name="Spradling A.C."/>
            <person name="Stapleton M."/>
            <person name="Strong R."/>
            <person name="Sun E."/>
            <person name="Svirskas R."/>
            <person name="Tector C."/>
            <person name="Turner R."/>
            <person name="Venter E."/>
            <person name="Wang A.H."/>
            <person name="Wang X."/>
            <person name="Wang Z.-Y."/>
            <person name="Wassarman D.A."/>
            <person name="Weinstock G.M."/>
            <person name="Weissenbach J."/>
            <person name="Williams S.M."/>
            <person name="Woodage T."/>
            <person name="Worley K.C."/>
            <person name="Wu D."/>
            <person name="Yang S."/>
            <person name="Yao Q.A."/>
            <person name="Ye J."/>
            <person name="Yeh R.-F."/>
            <person name="Zaveri J.S."/>
            <person name="Zhan M."/>
            <person name="Zhang G."/>
            <person name="Zhao Q."/>
            <person name="Zheng L."/>
            <person name="Zheng X.H."/>
            <person name="Zhong F.N."/>
            <person name="Zhong W."/>
            <person name="Zhou X."/>
            <person name="Zhu S.C."/>
            <person name="Zhu X."/>
            <person name="Smith H.O."/>
            <person name="Gibbs R.A."/>
            <person name="Myers E.W."/>
            <person name="Rubin G.M."/>
            <person name="Venter J.C."/>
        </authorList>
    </citation>
    <scope>NUCLEOTIDE SEQUENCE [LARGE SCALE GENOMIC DNA]</scope>
    <source>
        <strain evidence="15">Berkeley</strain>
    </source>
</reference>
<reference evidence="15" key="2">
    <citation type="journal article" date="2002" name="Genome Biol.">
        <title>Annotation of the Drosophila melanogaster euchromatic genome: a systematic review.</title>
        <authorList>
            <person name="Misra S."/>
            <person name="Crosby M.A."/>
            <person name="Mungall C.J."/>
            <person name="Matthews B.B."/>
            <person name="Campbell K.S."/>
            <person name="Hradecky P."/>
            <person name="Huang Y."/>
            <person name="Kaminker J.S."/>
            <person name="Millburn G.H."/>
            <person name="Prochnik S.E."/>
            <person name="Smith C.D."/>
            <person name="Tupy J.L."/>
            <person name="Whitfield E.J."/>
            <person name="Bayraktaroglu L."/>
            <person name="Berman B.P."/>
            <person name="Bettencourt B.R."/>
            <person name="Celniker S.E."/>
            <person name="de Grey A.D.N.J."/>
            <person name="Drysdale R.A."/>
            <person name="Harris N.L."/>
            <person name="Richter J."/>
            <person name="Russo S."/>
            <person name="Schroeder A.J."/>
            <person name="Shu S.Q."/>
            <person name="Stapleton M."/>
            <person name="Yamada C."/>
            <person name="Ashburner M."/>
            <person name="Gelbart W.M."/>
            <person name="Rubin G.M."/>
            <person name="Lewis S.E."/>
        </authorList>
    </citation>
    <scope>GENOME REANNOTATION</scope>
    <source>
        <strain evidence="15">Berkeley</strain>
    </source>
</reference>
<reference evidence="11" key="3">
    <citation type="journal article" date="2002" name="Genome Biol.">
        <title>A Drosophila full-length cDNA resource.</title>
        <authorList>
            <person name="Stapleton M."/>
            <person name="Carlson J.W."/>
            <person name="Brokstein P."/>
            <person name="Yu C."/>
            <person name="Champe M."/>
            <person name="George R.A."/>
            <person name="Guarin H."/>
            <person name="Kronmiller B."/>
            <person name="Pacleb J.M."/>
            <person name="Park S."/>
            <person name="Wan K.H."/>
            <person name="Rubin G.M."/>
            <person name="Celniker S.E."/>
        </authorList>
    </citation>
    <scope>NUCLEOTIDE SEQUENCE [LARGE SCALE MRNA]</scope>
    <source>
        <strain>Berkeley</strain>
        <tissue evidence="11">Head</tissue>
    </source>
</reference>
<reference evidence="12 13" key="4">
    <citation type="submission" date="2012-02" db="EMBL/GenBank/DDBJ databases">
        <authorList>
            <person name="Carlson J."/>
            <person name="Booth B."/>
            <person name="Frise E."/>
            <person name="Park S."/>
            <person name="Wan K."/>
            <person name="Yu C."/>
            <person name="Celniker S."/>
        </authorList>
    </citation>
    <scope>NUCLEOTIDE SEQUENCE [LARGE SCALE MRNA]</scope>
    <source>
        <strain evidence="12 13">Berkeley</strain>
        <tissue evidence="12">Head</tissue>
    </source>
</reference>
<reference evidence="10" key="5">
    <citation type="journal article" date="2002" name="FEBS Lett.">
        <title>Comparative characterization of Aedes 3-hydroxykynurenine transaminase/alanine glyoxylate transaminase and Drosophila serine pyruvate aminotransferase.</title>
        <authorList>
            <person name="Han Q."/>
            <person name="Li J."/>
        </authorList>
    </citation>
    <scope>FUNCTION</scope>
    <scope>CATALYTIC ACTIVITY</scope>
    <scope>BIOPHYSICOCHEMICAL PROPERTIES</scope>
    <scope>SUBUNIT</scope>
</reference>
<reference evidence="10" key="6">
    <citation type="journal article" date="2018" name="BMC Nephrol.">
        <title>Efficacy of Hydroxy-L-proline (HYP) analogs in the treatment of primary hyperoxaluria in Drosophila Melanogaster.</title>
        <authorList>
            <person name="Yang H."/>
            <person name="Male M."/>
            <person name="Li Y."/>
            <person name="Wang N."/>
            <person name="Zhao C."/>
            <person name="Jin S."/>
            <person name="Hu J."/>
            <person name="Chen Z."/>
            <person name="Ye Z."/>
            <person name="Xu H."/>
        </authorList>
    </citation>
    <scope>DISRUPTION PHENOTYPE</scope>
</reference>
<organism evidence="15">
    <name type="scientific">Drosophila melanogaster</name>
    <name type="common">Fruit fly</name>
    <dbReference type="NCBI Taxonomy" id="7227"/>
    <lineage>
        <taxon>Eukaryota</taxon>
        <taxon>Metazoa</taxon>
        <taxon>Ecdysozoa</taxon>
        <taxon>Arthropoda</taxon>
        <taxon>Hexapoda</taxon>
        <taxon>Insecta</taxon>
        <taxon>Pterygota</taxon>
        <taxon>Neoptera</taxon>
        <taxon>Endopterygota</taxon>
        <taxon>Diptera</taxon>
        <taxon>Brachycera</taxon>
        <taxon>Muscomorpha</taxon>
        <taxon>Ephydroidea</taxon>
        <taxon>Drosophilidae</taxon>
        <taxon>Drosophila</taxon>
        <taxon>Sophophora</taxon>
    </lineage>
</organism>
<comment type="function">
    <text evidence="7">Catalyzes the pyridoxal 5'-phosphate-dependent transamination of alanine with glyoxylate as an amino group acceptor (PubMed:12220660). Can also catalyze, although with much less efficiency, the transamination of amino-butyrate, phenylalanine and serine with glyoxylate or pyruvate as an amino group acceptor (PubMed:12220660). Does not catalyze the transamination of both 3-hydroxykynurenine and L-kynurenine (PubMed:12220660). May play a role in the detoxification of glyoxylate, a toxic plant metabolite from the fly diet (PubMed:12220660).</text>
</comment>
<comment type="catalytic activity">
    <reaction evidence="3 7">
        <text>glyoxylate + L-alanine = glycine + pyruvate</text>
        <dbReference type="Rhea" id="RHEA:24248"/>
        <dbReference type="ChEBI" id="CHEBI:15361"/>
        <dbReference type="ChEBI" id="CHEBI:36655"/>
        <dbReference type="ChEBI" id="CHEBI:57305"/>
        <dbReference type="ChEBI" id="CHEBI:57972"/>
        <dbReference type="EC" id="2.6.1.44"/>
    </reaction>
</comment>
<comment type="catalytic activity">
    <reaction evidence="7">
        <text>(2S)-2-aminobutanoate + glyoxylate = 2-oxobutanoate + glycine</text>
        <dbReference type="Rhea" id="RHEA:77339"/>
        <dbReference type="ChEBI" id="CHEBI:16763"/>
        <dbReference type="ChEBI" id="CHEBI:36655"/>
        <dbReference type="ChEBI" id="CHEBI:57305"/>
        <dbReference type="ChEBI" id="CHEBI:74359"/>
    </reaction>
</comment>
<comment type="catalytic activity">
    <reaction evidence="7">
        <text>glyoxylate + L-phenylalanine = 3-phenylpyruvate + glycine</text>
        <dbReference type="Rhea" id="RHEA:69120"/>
        <dbReference type="ChEBI" id="CHEBI:18005"/>
        <dbReference type="ChEBI" id="CHEBI:36655"/>
        <dbReference type="ChEBI" id="CHEBI:57305"/>
        <dbReference type="ChEBI" id="CHEBI:58095"/>
    </reaction>
</comment>
<comment type="catalytic activity">
    <reaction evidence="7">
        <text>glyoxylate + L-serine = 3-hydroxypyruvate + glycine</text>
        <dbReference type="Rhea" id="RHEA:19125"/>
        <dbReference type="ChEBI" id="CHEBI:17180"/>
        <dbReference type="ChEBI" id="CHEBI:33384"/>
        <dbReference type="ChEBI" id="CHEBI:36655"/>
        <dbReference type="ChEBI" id="CHEBI:57305"/>
    </reaction>
</comment>
<comment type="catalytic activity">
    <reaction evidence="7">
        <text>2-oxobutanoate + L-alanine = (2S)-2-aminobutanoate + pyruvate</text>
        <dbReference type="Rhea" id="RHEA:77355"/>
        <dbReference type="ChEBI" id="CHEBI:15361"/>
        <dbReference type="ChEBI" id="CHEBI:16763"/>
        <dbReference type="ChEBI" id="CHEBI:57972"/>
        <dbReference type="ChEBI" id="CHEBI:74359"/>
    </reaction>
</comment>
<comment type="catalytic activity">
    <reaction evidence="7">
        <text>L-phenylalanine + pyruvate = 3-phenylpyruvate + L-alanine</text>
        <dbReference type="Rhea" id="RHEA:13053"/>
        <dbReference type="ChEBI" id="CHEBI:15361"/>
        <dbReference type="ChEBI" id="CHEBI:18005"/>
        <dbReference type="ChEBI" id="CHEBI:57972"/>
        <dbReference type="ChEBI" id="CHEBI:58095"/>
    </reaction>
</comment>
<comment type="catalytic activity">
    <reaction evidence="7">
        <text>L-serine + pyruvate = 3-hydroxypyruvate + L-alanine</text>
        <dbReference type="Rhea" id="RHEA:22852"/>
        <dbReference type="ChEBI" id="CHEBI:15361"/>
        <dbReference type="ChEBI" id="CHEBI:17180"/>
        <dbReference type="ChEBI" id="CHEBI:33384"/>
        <dbReference type="ChEBI" id="CHEBI:57972"/>
    </reaction>
</comment>
<comment type="cofactor">
    <cofactor evidence="3 6">
        <name>pyridoxal 5'-phosphate</name>
        <dbReference type="ChEBI" id="CHEBI:597326"/>
    </cofactor>
</comment>
<comment type="biophysicochemical properties">
    <kinetics>
        <KM evidence="7">64 mM for glyoxylate (at 50 degrees Celsius, pH 7 and with alanine as cosubstrate)</KM>
        <KM evidence="7">149 mM for alanine (at 50 degrees Celsius, pH 7 and with glyoxylate as cosubstrate)</KM>
        <Vmax evidence="7">170.0 umol/min/mg enzyme toward glyoxylate (at 50 degrees Celsius, pH 7 and with alanine as cosubstrate)</Vmax>
        <Vmax evidence="7">197.0 umol/min/mg enzyme toward alanine (at 50 degrees Celsius, pH 7 and with glyoxylate as cosubstrate)</Vmax>
        <text evidence="7">kcat is 6800 min(-1) for glyoxylate (at 50 degrees Celsius, pH 7 and with alanine as cosubstrate) (PubMed:12220660). kcat is 7880 min(-1) for alanine (at 50 degrees Celsius, pH 7 and with glyoxylate as cosubstrate) (PubMed:12220660).</text>
    </kinetics>
    <phDependence>
        <text evidence="7">Optimum pH is 9 with alanine and glyoxylate as substrates.</text>
    </phDependence>
    <temperatureDependence>
        <text evidence="7">Optimum temperature is between 30 and 80 degrees Celsius with alanine and glyoxylate as substrates.</text>
    </temperatureDependence>
</comment>
<comment type="subunit">
    <text evidence="7">Homodimer.</text>
</comment>
<comment type="subcellular location">
    <subcellularLocation>
        <location evidence="1">Peroxisome</location>
    </subcellularLocation>
</comment>
<comment type="disruption phenotype">
    <text evidence="8">RNAi-mediated knockdown causes accumulation of calcium oxalate crystals in Malpighian tubules.</text>
</comment>
<comment type="similarity">
    <text evidence="3 5">Belongs to the class-V pyridoxal-phosphate-dependent aminotransferase family.</text>
</comment>
<comment type="sequence caution" evidence="10">
    <conflict type="frameshift">
        <sequence resource="EMBL-CDS" id="AAL39372"/>
    </conflict>
</comment>
<comment type="sequence caution" evidence="10">
    <conflict type="miscellaneous discrepancy">
        <sequence resource="EMBL-CDS" id="AAL39372"/>
    </conflict>
    <text>Intron retention.</text>
</comment>
<sequence>MEVPPPLVLKRPLYVPSKTLMGPGPSNCSHRVLEAMSNPVLGHMHPECLQIMDEVKEGIKYIFQTLNDATMCISGAGHSGMEAALCNLIEDGDVVLMGITGVWGHRAGDMARRYGAEVHYVEASFGRALSHEEITFAFEAHRPKVFFIAQGDSSTGIIQQNIRELGELCRKYDCFLIVDTVASLGGTEFLMDEWKVDVAYTGSQKSLGGPAGLTPISFSKRALTRIRKRKTKPKVYYFDILLIGQYWGCYGTPRIYHHTISSTLLYGLREALAHFCAVGLKAVVRRHQECSKRLQLGIEELGLEMFVSREEERLPTVNTIKVPFGVDWKKVAEYAMRKYSVEISGGLGPTVEHVFRIGLMGENATVERVDMVLSILNEAIQSSKLGIKTDLSKI</sequence>
<name>AGT_DROME</name>
<proteinExistence type="evidence at protein level"/>
<evidence type="ECO:0000250" key="1">
    <source>
        <dbReference type="UniProtKB" id="P21549"/>
    </source>
</evidence>
<evidence type="ECO:0000250" key="2">
    <source>
        <dbReference type="UniProtKB" id="Q3LSM4"/>
    </source>
</evidence>
<evidence type="ECO:0000255" key="3">
    <source>
        <dbReference type="PIRNR" id="PIRNR000524"/>
    </source>
</evidence>
<evidence type="ECO:0000255" key="4">
    <source>
        <dbReference type="PIRSR" id="PIRSR000524-50"/>
    </source>
</evidence>
<evidence type="ECO:0000255" key="5">
    <source>
        <dbReference type="RuleBase" id="RU004075"/>
    </source>
</evidence>
<evidence type="ECO:0000255" key="6">
    <source>
        <dbReference type="RuleBase" id="RU004504"/>
    </source>
</evidence>
<evidence type="ECO:0000269" key="7">
    <source>
    </source>
</evidence>
<evidence type="ECO:0000269" key="8">
    <source>
    </source>
</evidence>
<evidence type="ECO:0000303" key="9">
    <source>
    </source>
</evidence>
<evidence type="ECO:0000305" key="10"/>
<evidence type="ECO:0000312" key="11">
    <source>
        <dbReference type="EMBL" id="AAL39372.1"/>
    </source>
</evidence>
<evidence type="ECO:0000312" key="12">
    <source>
        <dbReference type="EMBL" id="ACU24744.1"/>
    </source>
</evidence>
<evidence type="ECO:0000312" key="13">
    <source>
        <dbReference type="EMBL" id="AFC38910.1"/>
    </source>
</evidence>
<evidence type="ECO:0000312" key="14">
    <source>
        <dbReference type="FlyBase" id="FBgn0014031"/>
    </source>
</evidence>
<evidence type="ECO:0000312" key="15">
    <source>
        <dbReference type="Proteomes" id="UP000000803"/>
    </source>
</evidence>
<dbReference type="EC" id="2.6.1.44" evidence="3 7"/>
<dbReference type="EMBL" id="AE014298">
    <property type="protein sequence ID" value="AAF46168.1"/>
    <property type="molecule type" value="Genomic_DNA"/>
</dbReference>
<dbReference type="EMBL" id="AY069227">
    <property type="protein sequence ID" value="AAL39372.1"/>
    <property type="status" value="ALT_SEQ"/>
    <property type="molecule type" value="mRNA"/>
</dbReference>
<dbReference type="EMBL" id="BT099504">
    <property type="protein sequence ID" value="ACU24744.1"/>
    <property type="molecule type" value="mRNA"/>
</dbReference>
<dbReference type="EMBL" id="BT133279">
    <property type="protein sequence ID" value="AFC38910.1"/>
    <property type="molecule type" value="mRNA"/>
</dbReference>
<dbReference type="RefSeq" id="NP_511062.1">
    <property type="nucleotide sequence ID" value="NM_078507.2"/>
</dbReference>
<dbReference type="SMR" id="Q9W3Z3"/>
<dbReference type="FunCoup" id="Q9W3Z3">
    <property type="interactions" value="336"/>
</dbReference>
<dbReference type="STRING" id="7227.FBpp0070875"/>
<dbReference type="GlyGen" id="Q9W3Z3">
    <property type="glycosylation" value="1 site"/>
</dbReference>
<dbReference type="PaxDb" id="7227-FBpp0070875"/>
<dbReference type="EnsemblMetazoa" id="FBtr0070913">
    <property type="protein sequence ID" value="FBpp0070875"/>
    <property type="gene ID" value="FBgn0014031"/>
</dbReference>
<dbReference type="GeneID" id="31587"/>
<dbReference type="KEGG" id="dme:Dmel_CG3926"/>
<dbReference type="UCSC" id="CG3926-RA">
    <property type="organism name" value="d. melanogaster"/>
</dbReference>
<dbReference type="AGR" id="FB:FBgn0014031"/>
<dbReference type="CTD" id="189"/>
<dbReference type="FlyBase" id="FBgn0014031">
    <property type="gene designation" value="Agxt"/>
</dbReference>
<dbReference type="VEuPathDB" id="VectorBase:FBgn0014031"/>
<dbReference type="eggNOG" id="KOG2862">
    <property type="taxonomic scope" value="Eukaryota"/>
</dbReference>
<dbReference type="GeneTree" id="ENSGT00940000153241"/>
<dbReference type="HOGENOM" id="CLU_027686_0_0_1"/>
<dbReference type="InParanoid" id="Q9W3Z3"/>
<dbReference type="OMA" id="YEWDTPA"/>
<dbReference type="OrthoDB" id="7403325at2759"/>
<dbReference type="PhylomeDB" id="Q9W3Z3"/>
<dbReference type="Reactome" id="R-DME-389661">
    <property type="pathway name" value="Glyoxylate metabolism and glycine degradation"/>
</dbReference>
<dbReference type="Reactome" id="R-DME-9033241">
    <property type="pathway name" value="Peroxisomal protein import"/>
</dbReference>
<dbReference type="BioGRID-ORCS" id="31587">
    <property type="hits" value="0 hits in 3 CRISPR screens"/>
</dbReference>
<dbReference type="GenomeRNAi" id="31587"/>
<dbReference type="PRO" id="PR:Q9W3Z3"/>
<dbReference type="Proteomes" id="UP000000803">
    <property type="component" value="Chromosome X"/>
</dbReference>
<dbReference type="Bgee" id="FBgn0014031">
    <property type="expression patterns" value="Expressed in fat body cell in body wall and 65 other cell types or tissues"/>
</dbReference>
<dbReference type="ExpressionAtlas" id="Q9W3Z3">
    <property type="expression patterns" value="baseline and differential"/>
</dbReference>
<dbReference type="GO" id="GO:0005777">
    <property type="term" value="C:peroxisome"/>
    <property type="evidence" value="ECO:0000250"/>
    <property type="project" value="FlyBase"/>
</dbReference>
<dbReference type="GO" id="GO:0008453">
    <property type="term" value="F:alanine-glyoxylate transaminase activity"/>
    <property type="evidence" value="ECO:0000314"/>
    <property type="project" value="FlyBase"/>
</dbReference>
<dbReference type="GO" id="GO:0004760">
    <property type="term" value="F:L-serine-pyruvate transaminase activity"/>
    <property type="evidence" value="ECO:0000318"/>
    <property type="project" value="GO_Central"/>
</dbReference>
<dbReference type="GO" id="GO:0019265">
    <property type="term" value="P:glycine biosynthetic process, by transamination of glyoxylate"/>
    <property type="evidence" value="ECO:0000318"/>
    <property type="project" value="GO_Central"/>
</dbReference>
<dbReference type="GO" id="GO:0009436">
    <property type="term" value="P:glyoxylate catabolic process"/>
    <property type="evidence" value="ECO:0000314"/>
    <property type="project" value="FlyBase"/>
</dbReference>
<dbReference type="CDD" id="cd06451">
    <property type="entry name" value="AGAT_like"/>
    <property type="match status" value="1"/>
</dbReference>
<dbReference type="FunFam" id="3.90.1150.10:FF:000039">
    <property type="entry name" value="Serine--pyruvate aminotransferase"/>
    <property type="match status" value="1"/>
</dbReference>
<dbReference type="FunFam" id="3.40.640.10:FF:000191">
    <property type="entry name" value="Serine-pyruvate aminotransferase (AgxT)"/>
    <property type="match status" value="1"/>
</dbReference>
<dbReference type="Gene3D" id="3.90.1150.10">
    <property type="entry name" value="Aspartate Aminotransferase, domain 1"/>
    <property type="match status" value="1"/>
</dbReference>
<dbReference type="Gene3D" id="3.40.640.10">
    <property type="entry name" value="Type I PLP-dependent aspartate aminotransferase-like (Major domain)"/>
    <property type="match status" value="1"/>
</dbReference>
<dbReference type="InterPro" id="IPR000192">
    <property type="entry name" value="Aminotrans_V_dom"/>
</dbReference>
<dbReference type="InterPro" id="IPR020578">
    <property type="entry name" value="Aminotrans_V_PyrdxlP_BS"/>
</dbReference>
<dbReference type="InterPro" id="IPR015424">
    <property type="entry name" value="PyrdxlP-dep_Trfase"/>
</dbReference>
<dbReference type="InterPro" id="IPR015421">
    <property type="entry name" value="PyrdxlP-dep_Trfase_major"/>
</dbReference>
<dbReference type="InterPro" id="IPR015422">
    <property type="entry name" value="PyrdxlP-dep_Trfase_small"/>
</dbReference>
<dbReference type="InterPro" id="IPR024169">
    <property type="entry name" value="SP_NH2Trfase/AEP_transaminase"/>
</dbReference>
<dbReference type="PANTHER" id="PTHR21152:SF40">
    <property type="entry name" value="ALANINE--GLYOXYLATE AMINOTRANSFERASE"/>
    <property type="match status" value="1"/>
</dbReference>
<dbReference type="PANTHER" id="PTHR21152">
    <property type="entry name" value="AMINOTRANSFERASE CLASS V"/>
    <property type="match status" value="1"/>
</dbReference>
<dbReference type="Pfam" id="PF00266">
    <property type="entry name" value="Aminotran_5"/>
    <property type="match status" value="1"/>
</dbReference>
<dbReference type="PIRSF" id="PIRSF000524">
    <property type="entry name" value="SPT"/>
    <property type="match status" value="1"/>
</dbReference>
<dbReference type="SUPFAM" id="SSF53383">
    <property type="entry name" value="PLP-dependent transferases"/>
    <property type="match status" value="1"/>
</dbReference>
<dbReference type="PROSITE" id="PS00595">
    <property type="entry name" value="AA_TRANSFER_CLASS_5"/>
    <property type="match status" value="1"/>
</dbReference>
<protein>
    <recommendedName>
        <fullName evidence="3">Alanine--glyoxylate aminotransferase</fullName>
        <shortName evidence="10">AGT</shortName>
        <ecNumber evidence="3 7">2.6.1.44</ecNumber>
    </recommendedName>
</protein>
<accession>Q9W3Z3</accession>
<accession>C6TP18</accession>
<accession>Q8T0J1</accession>
<gene>
    <name evidence="9 14" type="primary">Agxt</name>
    <name evidence="14" type="synonym">Spat</name>
    <name evidence="14" type="ORF">CG3926</name>
</gene>
<feature type="chain" id="PRO_0000452187" description="Alanine--glyoxylate aminotransferase">
    <location>
        <begin position="1"/>
        <end position="394"/>
    </location>
</feature>
<feature type="binding site" description="in other chain" evidence="2">
    <location>
        <begin position="76"/>
        <end position="78"/>
    </location>
    <ligand>
        <name>pyridoxal 5'-phosphate</name>
        <dbReference type="ChEBI" id="CHEBI:597326"/>
        <note>ligand shared between dimeric partners</note>
    </ligand>
</feature>
<feature type="binding site" description="in other chain" evidence="2">
    <location>
        <position position="153"/>
    </location>
    <ligand>
        <name>pyridoxal 5'-phosphate</name>
        <dbReference type="ChEBI" id="CHEBI:597326"/>
        <note>ligand shared between dimeric partners</note>
    </ligand>
</feature>
<feature type="binding site" evidence="2">
    <location>
        <position position="153"/>
    </location>
    <ligand>
        <name>substrate</name>
    </ligand>
</feature>
<feature type="binding site" description="in other chain" evidence="2">
    <location>
        <position position="204"/>
    </location>
    <ligand>
        <name>pyridoxal 5'-phosphate</name>
        <dbReference type="ChEBI" id="CHEBI:597326"/>
        <note>ligand shared between dimeric partners</note>
    </ligand>
</feature>
<feature type="binding site" evidence="2">
    <location>
        <position position="256"/>
    </location>
    <ligand>
        <name>pyridoxal 5'-phosphate</name>
        <dbReference type="ChEBI" id="CHEBI:597326"/>
        <note>ligand shared between dimeric partners</note>
    </ligand>
</feature>
<feature type="binding site" evidence="2">
    <location>
        <position position="259"/>
    </location>
    <ligand>
        <name>pyridoxal 5'-phosphate</name>
        <dbReference type="ChEBI" id="CHEBI:597326"/>
        <note>ligand shared between dimeric partners</note>
    </ligand>
</feature>
<feature type="binding site" evidence="2">
    <location>
        <position position="356"/>
    </location>
    <ligand>
        <name>substrate</name>
    </ligand>
</feature>
<feature type="modified residue" description="N6-(pyridoxal phosphate)lysine" evidence="4">
    <location>
        <position position="205"/>
    </location>
</feature>
<feature type="sequence conflict" description="In Ref. 4; ACU24744." evidence="10" ref="4">
    <original>L</original>
    <variation>P</variation>
    <location>
        <position position="184"/>
    </location>
</feature>